<sequence length="488" mass="55715">MSQISMFVRKLHKFSYNPNYKFKCGLEIHTQLKTKYKLFSLSPTSYNEPPNTKLSYFDVGLPGTQPLLNPEALLLALKASVALNCDIQSYSSFDRKHYFYADQPLGYQITQHYYPLAKNGYVQLNKFDDMPDKVISLEQVQLEQDTGKTVNYDDRINVDLNRANTPLIEVVTKPDFENIDQVQAFVRKYQLLVSHLDICTGDLETGAIRVDANISVNNNPRVEIKNLGSSGEIVDALKYEYNRQVTLLQNNGKIIQETRGWNGIATESLRKKENAVDYRYVPDSELPVIRLDKNIQAQLQNTLDELPDSVLDRLTKEPYNLQLAHARNLLFQPEILDYYENIFGRIRDANKWFFHELLAAFAKSDVEFQVDIVSPDMLVDIVSSVEKNEISLTGARIILKHIIRNKSTKTLPQLIKELDIGKPEASAELEEAINEICQQIINTNADVVEKIARGHTNALQVLIGQAMKATKGKVHAKEFRSKFMELLK</sequence>
<comment type="function">
    <text evidence="1">Allows the formation of correctly charged Gln-tRNA(Gln) through the transamidation of misacylated Glu-tRNA(Gln) in the mitochondria. The reaction takes place in the presence of glutamine and ATP through an activated gamma-phospho-Glu-tRNA(Gln).</text>
</comment>
<comment type="catalytic activity">
    <reaction evidence="1">
        <text>L-glutamyl-tRNA(Gln) + L-glutamine + ATP + H2O = L-glutaminyl-tRNA(Gln) + L-glutamate + ADP + phosphate + H(+)</text>
        <dbReference type="Rhea" id="RHEA:17521"/>
        <dbReference type="Rhea" id="RHEA-COMP:9681"/>
        <dbReference type="Rhea" id="RHEA-COMP:9684"/>
        <dbReference type="ChEBI" id="CHEBI:15377"/>
        <dbReference type="ChEBI" id="CHEBI:15378"/>
        <dbReference type="ChEBI" id="CHEBI:29985"/>
        <dbReference type="ChEBI" id="CHEBI:30616"/>
        <dbReference type="ChEBI" id="CHEBI:43474"/>
        <dbReference type="ChEBI" id="CHEBI:58359"/>
        <dbReference type="ChEBI" id="CHEBI:78520"/>
        <dbReference type="ChEBI" id="CHEBI:78521"/>
        <dbReference type="ChEBI" id="CHEBI:456216"/>
    </reaction>
</comment>
<comment type="subunit">
    <text evidence="1">Subunit of the heterotrimeric GatFAB amidotransferase (AdT) complex, composed of A, B and F subunits.</text>
</comment>
<comment type="subcellular location">
    <subcellularLocation>
        <location evidence="1">Mitochondrion</location>
    </subcellularLocation>
</comment>
<comment type="miscellaneous">
    <text evidence="1">This protein may be expected to contain an N-terminal transit peptide but none has been predicted.</text>
</comment>
<comment type="similarity">
    <text evidence="1">Belongs to the GatB/GatE family. GatB subfamily.</text>
</comment>
<evidence type="ECO:0000255" key="1">
    <source>
        <dbReference type="HAMAP-Rule" id="MF_03147"/>
    </source>
</evidence>
<feature type="chain" id="PRO_0000413249" description="Glutamyl-tRNA(Gln) amidotransferase subunit B, mitochondrial">
    <location>
        <begin position="1"/>
        <end position="488"/>
    </location>
</feature>
<proteinExistence type="inferred from homology"/>
<keyword id="KW-0067">ATP-binding</keyword>
<keyword id="KW-0436">Ligase</keyword>
<keyword id="KW-0496">Mitochondrion</keyword>
<keyword id="KW-0547">Nucleotide-binding</keyword>
<keyword id="KW-0648">Protein biosynthesis</keyword>
<protein>
    <recommendedName>
        <fullName evidence="1">Glutamyl-tRNA(Gln) amidotransferase subunit B, mitochondrial</fullName>
        <shortName evidence="1">Glu-AdT subunit B</shortName>
        <ecNumber evidence="1">6.3.5.-</ecNumber>
    </recommendedName>
</protein>
<dbReference type="EC" id="6.3.5.-" evidence="1"/>
<dbReference type="EMBL" id="CH672346">
    <property type="protein sequence ID" value="EEQ42626.1"/>
    <property type="molecule type" value="Genomic_DNA"/>
</dbReference>
<dbReference type="SMR" id="C4YE90"/>
<dbReference type="PaxDb" id="5476-C4YE90"/>
<dbReference type="VEuPathDB" id="FungiDB:CAWG_00844"/>
<dbReference type="HOGENOM" id="CLU_019240_4_0_1"/>
<dbReference type="OMA" id="ARKWWMG"/>
<dbReference type="OrthoDB" id="6352at766764"/>
<dbReference type="Proteomes" id="UP000001429">
    <property type="component" value="Chromosome 1, Supercontig 1.1"/>
</dbReference>
<dbReference type="GO" id="GO:0030956">
    <property type="term" value="C:glutamyl-tRNA(Gln) amidotransferase complex"/>
    <property type="evidence" value="ECO:0007669"/>
    <property type="project" value="UniProtKB-UniRule"/>
</dbReference>
<dbReference type="GO" id="GO:0005739">
    <property type="term" value="C:mitochondrion"/>
    <property type="evidence" value="ECO:0007669"/>
    <property type="project" value="UniProtKB-SubCell"/>
</dbReference>
<dbReference type="GO" id="GO:0005524">
    <property type="term" value="F:ATP binding"/>
    <property type="evidence" value="ECO:0007669"/>
    <property type="project" value="UniProtKB-KW"/>
</dbReference>
<dbReference type="GO" id="GO:0050567">
    <property type="term" value="F:glutaminyl-tRNA synthase (glutamine-hydrolyzing) activity"/>
    <property type="evidence" value="ECO:0007669"/>
    <property type="project" value="UniProtKB-UniRule"/>
</dbReference>
<dbReference type="GO" id="GO:0070681">
    <property type="term" value="P:glutaminyl-tRNAGln biosynthesis via transamidation"/>
    <property type="evidence" value="ECO:0007669"/>
    <property type="project" value="UniProtKB-UniRule"/>
</dbReference>
<dbReference type="GO" id="GO:0032543">
    <property type="term" value="P:mitochondrial translation"/>
    <property type="evidence" value="ECO:0007669"/>
    <property type="project" value="UniProtKB-UniRule"/>
</dbReference>
<dbReference type="Gene3D" id="1.10.10.410">
    <property type="match status" value="1"/>
</dbReference>
<dbReference type="HAMAP" id="MF_00121">
    <property type="entry name" value="GatB"/>
    <property type="match status" value="1"/>
</dbReference>
<dbReference type="InterPro" id="IPR017959">
    <property type="entry name" value="Asn/Gln-tRNA_amidoTrfase_suB/E"/>
</dbReference>
<dbReference type="InterPro" id="IPR006075">
    <property type="entry name" value="Asn/Gln-tRNA_Trfase_suB/E_cat"/>
</dbReference>
<dbReference type="InterPro" id="IPR018027">
    <property type="entry name" value="Asn/Gln_amidotransferase"/>
</dbReference>
<dbReference type="InterPro" id="IPR003789">
    <property type="entry name" value="Asn/Gln_tRNA_amidoTrase-B-like"/>
</dbReference>
<dbReference type="InterPro" id="IPR004413">
    <property type="entry name" value="GatB"/>
</dbReference>
<dbReference type="InterPro" id="IPR023168">
    <property type="entry name" value="GatB_Yqey_C_2"/>
</dbReference>
<dbReference type="InterPro" id="IPR017958">
    <property type="entry name" value="Gln-tRNA_amidoTrfase_suB_CS"/>
</dbReference>
<dbReference type="InterPro" id="IPR014746">
    <property type="entry name" value="Gln_synth/guanido_kin_cat_dom"/>
</dbReference>
<dbReference type="NCBIfam" id="TIGR00133">
    <property type="entry name" value="gatB"/>
    <property type="match status" value="1"/>
</dbReference>
<dbReference type="NCBIfam" id="NF004012">
    <property type="entry name" value="PRK05477.1-2"/>
    <property type="match status" value="1"/>
</dbReference>
<dbReference type="PANTHER" id="PTHR11659">
    <property type="entry name" value="GLUTAMYL-TRNA GLN AMIDOTRANSFERASE SUBUNIT B MITOCHONDRIAL AND PROKARYOTIC PET112-RELATED"/>
    <property type="match status" value="1"/>
</dbReference>
<dbReference type="PANTHER" id="PTHR11659:SF0">
    <property type="entry name" value="GLUTAMYL-TRNA(GLN) AMIDOTRANSFERASE SUBUNIT B, MITOCHONDRIAL"/>
    <property type="match status" value="1"/>
</dbReference>
<dbReference type="Pfam" id="PF02934">
    <property type="entry name" value="GatB_N"/>
    <property type="match status" value="1"/>
</dbReference>
<dbReference type="Pfam" id="PF02637">
    <property type="entry name" value="GatB_Yqey"/>
    <property type="match status" value="1"/>
</dbReference>
<dbReference type="SMART" id="SM00845">
    <property type="entry name" value="GatB_Yqey"/>
    <property type="match status" value="1"/>
</dbReference>
<dbReference type="SUPFAM" id="SSF89095">
    <property type="entry name" value="GatB/YqeY motif"/>
    <property type="match status" value="1"/>
</dbReference>
<dbReference type="SUPFAM" id="SSF55931">
    <property type="entry name" value="Glutamine synthetase/guanido kinase"/>
    <property type="match status" value="1"/>
</dbReference>
<dbReference type="PROSITE" id="PS01234">
    <property type="entry name" value="GATB"/>
    <property type="match status" value="1"/>
</dbReference>
<gene>
    <name evidence="1" type="primary">PET112</name>
    <name type="ORF">CAWG_00844</name>
</gene>
<organism>
    <name type="scientific">Candida albicans (strain WO-1)</name>
    <name type="common">Yeast</name>
    <dbReference type="NCBI Taxonomy" id="294748"/>
    <lineage>
        <taxon>Eukaryota</taxon>
        <taxon>Fungi</taxon>
        <taxon>Dikarya</taxon>
        <taxon>Ascomycota</taxon>
        <taxon>Saccharomycotina</taxon>
        <taxon>Pichiomycetes</taxon>
        <taxon>Debaryomycetaceae</taxon>
        <taxon>Candida/Lodderomyces clade</taxon>
        <taxon>Candida</taxon>
    </lineage>
</organism>
<reference key="1">
    <citation type="journal article" date="2009" name="Nature">
        <title>Evolution of pathogenicity and sexual reproduction in eight Candida genomes.</title>
        <authorList>
            <person name="Butler G."/>
            <person name="Rasmussen M.D."/>
            <person name="Lin M.F."/>
            <person name="Santos M.A.S."/>
            <person name="Sakthikumar S."/>
            <person name="Munro C.A."/>
            <person name="Rheinbay E."/>
            <person name="Grabherr M."/>
            <person name="Forche A."/>
            <person name="Reedy J.L."/>
            <person name="Agrafioti I."/>
            <person name="Arnaud M.B."/>
            <person name="Bates S."/>
            <person name="Brown A.J.P."/>
            <person name="Brunke S."/>
            <person name="Costanzo M.C."/>
            <person name="Fitzpatrick D.A."/>
            <person name="de Groot P.W.J."/>
            <person name="Harris D."/>
            <person name="Hoyer L.L."/>
            <person name="Hube B."/>
            <person name="Klis F.M."/>
            <person name="Kodira C."/>
            <person name="Lennard N."/>
            <person name="Logue M.E."/>
            <person name="Martin R."/>
            <person name="Neiman A.M."/>
            <person name="Nikolaou E."/>
            <person name="Quail M.A."/>
            <person name="Quinn J."/>
            <person name="Santos M.C."/>
            <person name="Schmitzberger F.F."/>
            <person name="Sherlock G."/>
            <person name="Shah P."/>
            <person name="Silverstein K.A.T."/>
            <person name="Skrzypek M.S."/>
            <person name="Soll D."/>
            <person name="Staggs R."/>
            <person name="Stansfield I."/>
            <person name="Stumpf M.P.H."/>
            <person name="Sudbery P.E."/>
            <person name="Srikantha T."/>
            <person name="Zeng Q."/>
            <person name="Berman J."/>
            <person name="Berriman M."/>
            <person name="Heitman J."/>
            <person name="Gow N.A.R."/>
            <person name="Lorenz M.C."/>
            <person name="Birren B.W."/>
            <person name="Kellis M."/>
            <person name="Cuomo C.A."/>
        </authorList>
    </citation>
    <scope>NUCLEOTIDE SEQUENCE [LARGE SCALE GENOMIC DNA]</scope>
    <source>
        <strain>WO-1</strain>
    </source>
</reference>
<name>GATB_CANAW</name>
<accession>C4YE90</accession>